<proteinExistence type="inferred from homology"/>
<protein>
    <recommendedName>
        <fullName evidence="1">2-succinyl-5-enolpyruvyl-6-hydroxy-3-cyclohexene-1-carboxylate synthase</fullName>
        <shortName evidence="1">SEPHCHC synthase</shortName>
        <ecNumber evidence="1">2.2.1.9</ecNumber>
    </recommendedName>
    <alternativeName>
        <fullName evidence="1">Menaquinone biosynthesis protein MenD</fullName>
    </alternativeName>
</protein>
<sequence>MNPSTTQARVVVDELIRGGVRDVVLCPGSRNAPLAFALQDADRSGRIRLHVRIDERTAGYLAIGLAIGAGAPVCVAMTSGTAVANLGPAVVEANYARVPLIVLSANRPYELLGTGANQTMEQLGYFGTQVRASISLGLAEDAPERTSALNATWRSATCRVLAAATGARTANAGPVHFDIPLREPLVPDPEPLGAVTPPGRPAGKPWTYTPPVTFDQPLDIDLSVDTVVISGHGAGVHPNLAALPTVAEPTAPRSGDNPLHPLALPLLRPQQVIMLGRPTLHRPVSVLLADAEVPVFALTTGPRWPDVSGNSQATGTRAVTTGAPRPAWLDRCAAMNRHAIAAVREQLAAHPLTTGLHVAAAVSHALRPGDQLVLGASNPVRDVALAGLDTRGIRVRSNRGVAGIDGTVSTAIGAALAYEGAHERTGSPDSPPRTIALIGDLTFVHDSSGLLIGPTEPIPRSLTIVVSNDNGGGIFELLEQGDPRFSDVSSRIFGTPHDVDVGALCRAYHVESRQIEVDELGPTLDQPGAGMRVLEVKADRSSLRQLHAAIKAAL</sequence>
<reference key="1">
    <citation type="submission" date="2007-04" db="EMBL/GenBank/DDBJ databases">
        <title>The complete genome sequence of Mycobacterium tuberculosis F11.</title>
        <authorList>
            <person name="Birren B."/>
            <person name="Lander E."/>
            <person name="Galagan J."/>
            <person name="Devon K."/>
            <person name="Nusbaum C."/>
            <person name="Borowsky M.L."/>
            <person name="Grabherr M."/>
            <person name="Mauceli E."/>
            <person name="Brockman W."/>
            <person name="Young S."/>
            <person name="LaButti K."/>
            <person name="Pushparaj V."/>
            <person name="Sykes S."/>
            <person name="Baldwin J."/>
            <person name="Fitzgerald M."/>
            <person name="Bloom T."/>
            <person name="Zimmer A."/>
            <person name="Settipalli S."/>
            <person name="Shea T."/>
            <person name="Arachchi H."/>
            <person name="Macdonald P."/>
            <person name="Abouelleil A."/>
            <person name="Lui A."/>
            <person name="Priest M."/>
            <person name="Berlin A."/>
            <person name="Gearin G."/>
            <person name="Brown A."/>
            <person name="Aftuck L."/>
            <person name="Bessette D."/>
            <person name="Allen N."/>
            <person name="Lubonja R."/>
            <person name="Lokyitsang T."/>
            <person name="Matthews C."/>
            <person name="Dunbar C."/>
            <person name="Benamara M."/>
            <person name="Nguyen T."/>
            <person name="Negash T."/>
            <person name="DeCaprio D."/>
            <person name="Crawford M."/>
            <person name="Koehrsen M."/>
            <person name="Engels R."/>
            <person name="Montgomery P."/>
            <person name="Pearson M."/>
            <person name="Howarth C."/>
            <person name="Kodira C."/>
            <person name="Zeng Q."/>
            <person name="Yandava C."/>
            <person name="O'Leary S."/>
            <person name="Alvarado L."/>
            <person name="Victor T."/>
            <person name="Murray M."/>
        </authorList>
    </citation>
    <scope>NUCLEOTIDE SEQUENCE [LARGE SCALE GENOMIC DNA]</scope>
    <source>
        <strain>F11</strain>
    </source>
</reference>
<keyword id="KW-0460">Magnesium</keyword>
<keyword id="KW-0464">Manganese</keyword>
<keyword id="KW-0474">Menaquinone biosynthesis</keyword>
<keyword id="KW-0479">Metal-binding</keyword>
<keyword id="KW-0786">Thiamine pyrophosphate</keyword>
<keyword id="KW-0808">Transferase</keyword>
<dbReference type="EC" id="2.2.1.9" evidence="1"/>
<dbReference type="EMBL" id="CP000717">
    <property type="protein sequence ID" value="ABR04908.1"/>
    <property type="molecule type" value="Genomic_DNA"/>
</dbReference>
<dbReference type="RefSeq" id="WP_003402927.1">
    <property type="nucleotide sequence ID" value="NZ_KK339377.1"/>
</dbReference>
<dbReference type="SMR" id="A1QNY1"/>
<dbReference type="KEGG" id="mtf:TBFG_10565"/>
<dbReference type="PATRIC" id="fig|336982.11.peg.615"/>
<dbReference type="HOGENOM" id="CLU_006051_4_1_11"/>
<dbReference type="UniPathway" id="UPA00079"/>
<dbReference type="UniPathway" id="UPA01057">
    <property type="reaction ID" value="UER00164"/>
</dbReference>
<dbReference type="GO" id="GO:0070204">
    <property type="term" value="F:2-succinyl-5-enolpyruvyl-6-hydroxy-3-cyclohexene-1-carboxylic-acid synthase activity"/>
    <property type="evidence" value="ECO:0007669"/>
    <property type="project" value="UniProtKB-UniRule"/>
</dbReference>
<dbReference type="GO" id="GO:0000287">
    <property type="term" value="F:magnesium ion binding"/>
    <property type="evidence" value="ECO:0007669"/>
    <property type="project" value="UniProtKB-UniRule"/>
</dbReference>
<dbReference type="GO" id="GO:0030145">
    <property type="term" value="F:manganese ion binding"/>
    <property type="evidence" value="ECO:0007669"/>
    <property type="project" value="UniProtKB-UniRule"/>
</dbReference>
<dbReference type="GO" id="GO:0030976">
    <property type="term" value="F:thiamine pyrophosphate binding"/>
    <property type="evidence" value="ECO:0007669"/>
    <property type="project" value="UniProtKB-UniRule"/>
</dbReference>
<dbReference type="GO" id="GO:0009234">
    <property type="term" value="P:menaquinone biosynthetic process"/>
    <property type="evidence" value="ECO:0007669"/>
    <property type="project" value="UniProtKB-UniRule"/>
</dbReference>
<dbReference type="CDD" id="cd07037">
    <property type="entry name" value="TPP_PYR_MenD"/>
    <property type="match status" value="1"/>
</dbReference>
<dbReference type="CDD" id="cd02009">
    <property type="entry name" value="TPP_SHCHC_synthase"/>
    <property type="match status" value="1"/>
</dbReference>
<dbReference type="FunFam" id="3.40.50.970:FF:000066">
    <property type="entry name" value="2-succinyl-5-enolpyruvyl-6-hydroxy-3-cyclohexene-1-carboxylate synthase"/>
    <property type="match status" value="1"/>
</dbReference>
<dbReference type="FunFam" id="3.40.50.970:FF:000068">
    <property type="entry name" value="2-succinyl-5-enolpyruvyl-6-hydroxy-3-cyclohexene-1-carboxylate synthase"/>
    <property type="match status" value="1"/>
</dbReference>
<dbReference type="Gene3D" id="3.40.50.970">
    <property type="match status" value="2"/>
</dbReference>
<dbReference type="Gene3D" id="3.40.50.1220">
    <property type="entry name" value="TPP-binding domain"/>
    <property type="match status" value="1"/>
</dbReference>
<dbReference type="HAMAP" id="MF_01659">
    <property type="entry name" value="MenD"/>
    <property type="match status" value="1"/>
</dbReference>
<dbReference type="InterPro" id="IPR004433">
    <property type="entry name" value="MenaQ_synth_MenD"/>
</dbReference>
<dbReference type="InterPro" id="IPR029061">
    <property type="entry name" value="THDP-binding"/>
</dbReference>
<dbReference type="InterPro" id="IPR012001">
    <property type="entry name" value="Thiamin_PyroP_enz_TPP-bd_dom"/>
</dbReference>
<dbReference type="NCBIfam" id="TIGR00173">
    <property type="entry name" value="menD"/>
    <property type="match status" value="1"/>
</dbReference>
<dbReference type="PANTHER" id="PTHR42916">
    <property type="entry name" value="2-SUCCINYL-5-ENOLPYRUVYL-6-HYDROXY-3-CYCLOHEXENE-1-CARBOXYLATE SYNTHASE"/>
    <property type="match status" value="1"/>
</dbReference>
<dbReference type="PANTHER" id="PTHR42916:SF1">
    <property type="entry name" value="PROTEIN PHYLLO, CHLOROPLASTIC"/>
    <property type="match status" value="1"/>
</dbReference>
<dbReference type="Pfam" id="PF02776">
    <property type="entry name" value="TPP_enzyme_N"/>
    <property type="match status" value="1"/>
</dbReference>
<dbReference type="PIRSF" id="PIRSF004983">
    <property type="entry name" value="MenD"/>
    <property type="match status" value="1"/>
</dbReference>
<dbReference type="SUPFAM" id="SSF52518">
    <property type="entry name" value="Thiamin diphosphate-binding fold (THDP-binding)"/>
    <property type="match status" value="2"/>
</dbReference>
<evidence type="ECO:0000255" key="1">
    <source>
        <dbReference type="HAMAP-Rule" id="MF_01659"/>
    </source>
</evidence>
<organism>
    <name type="scientific">Mycobacterium tuberculosis (strain F11)</name>
    <dbReference type="NCBI Taxonomy" id="336982"/>
    <lineage>
        <taxon>Bacteria</taxon>
        <taxon>Bacillati</taxon>
        <taxon>Actinomycetota</taxon>
        <taxon>Actinomycetes</taxon>
        <taxon>Mycobacteriales</taxon>
        <taxon>Mycobacteriaceae</taxon>
        <taxon>Mycobacterium</taxon>
        <taxon>Mycobacterium tuberculosis complex</taxon>
    </lineage>
</organism>
<name>MEND_MYCTF</name>
<accession>A1QNY1</accession>
<feature type="chain" id="PRO_0000341786" description="2-succinyl-5-enolpyruvyl-6-hydroxy-3-cyclohexene-1-carboxylate synthase">
    <location>
        <begin position="1"/>
        <end position="554"/>
    </location>
</feature>
<comment type="function">
    <text evidence="1">Catalyzes the thiamine diphosphate-dependent decarboxylation of 2-oxoglutarate and the subsequent addition of the resulting succinic semialdehyde-thiamine pyrophosphate anion to isochorismate to yield 2-succinyl-5-enolpyruvyl-6-hydroxy-3-cyclohexene-1-carboxylate (SEPHCHC).</text>
</comment>
<comment type="catalytic activity">
    <reaction evidence="1">
        <text>isochorismate + 2-oxoglutarate + H(+) = 5-enolpyruvoyl-6-hydroxy-2-succinyl-cyclohex-3-ene-1-carboxylate + CO2</text>
        <dbReference type="Rhea" id="RHEA:25593"/>
        <dbReference type="ChEBI" id="CHEBI:15378"/>
        <dbReference type="ChEBI" id="CHEBI:16526"/>
        <dbReference type="ChEBI" id="CHEBI:16810"/>
        <dbReference type="ChEBI" id="CHEBI:29780"/>
        <dbReference type="ChEBI" id="CHEBI:58818"/>
        <dbReference type="EC" id="2.2.1.9"/>
    </reaction>
</comment>
<comment type="cofactor">
    <cofactor evidence="1">
        <name>Mg(2+)</name>
        <dbReference type="ChEBI" id="CHEBI:18420"/>
    </cofactor>
    <cofactor evidence="1">
        <name>Mn(2+)</name>
        <dbReference type="ChEBI" id="CHEBI:29035"/>
    </cofactor>
</comment>
<comment type="cofactor">
    <cofactor evidence="1">
        <name>thiamine diphosphate</name>
        <dbReference type="ChEBI" id="CHEBI:58937"/>
    </cofactor>
    <text evidence="1">Binds 1 thiamine pyrophosphate per subunit.</text>
</comment>
<comment type="pathway">
    <text evidence="1">Quinol/quinone metabolism; 1,4-dihydroxy-2-naphthoate biosynthesis; 1,4-dihydroxy-2-naphthoate from chorismate: step 2/7.</text>
</comment>
<comment type="pathway">
    <text evidence="1">Quinol/quinone metabolism; menaquinone biosynthesis.</text>
</comment>
<comment type="subunit">
    <text evidence="1">Homodimer.</text>
</comment>
<comment type="similarity">
    <text evidence="1">Belongs to the TPP enzyme family. MenD subfamily.</text>
</comment>
<gene>
    <name evidence="1" type="primary">menD</name>
    <name type="ordered locus">TBFG_10565</name>
</gene>